<proteinExistence type="inferred from homology"/>
<evidence type="ECO:0000255" key="1">
    <source>
        <dbReference type="HAMAP-Rule" id="MF_01365"/>
    </source>
</evidence>
<evidence type="ECO:0000305" key="2"/>
<keyword id="KW-1185">Reference proteome</keyword>
<keyword id="KW-0687">Ribonucleoprotein</keyword>
<keyword id="KW-0689">Ribosomal protein</keyword>
<keyword id="KW-0694">RNA-binding</keyword>
<keyword id="KW-0699">rRNA-binding</keyword>
<comment type="function">
    <text evidence="1">This protein binds to the 23S rRNA, and is important in its secondary structure. It is located near the subunit interface in the base of the L7/L12 stalk, and near the tRNA binding site of the peptidyltransferase center.</text>
</comment>
<comment type="subunit">
    <text evidence="1">Part of the 50S ribosomal subunit.</text>
</comment>
<comment type="similarity">
    <text evidence="1">Belongs to the universal ribosomal protein uL6 family.</text>
</comment>
<sequence>MSRIGKKPVAIPTGVTANIADGVLSVKGPKGELSMPLSSEVTYSLEDGQLSVQPVNDTKRARSFWGMQRTLVQNLIDGVTQGYSKTLQITGVGYRAASQGKTLKLQLGYSHDIDFAIPEGITIQTPEPTTVNISGIDKQKVGQVAAEIRRWRRPEPYKGKGIKYAGEFIFRKEGKKK</sequence>
<reference key="1">
    <citation type="journal article" date="2005" name="Nat. Biotechnol.">
        <title>The genome sequence of the ethanologenic bacterium Zymomonas mobilis ZM4.</title>
        <authorList>
            <person name="Seo J.-S."/>
            <person name="Chong H."/>
            <person name="Park H.S."/>
            <person name="Yoon K.-O."/>
            <person name="Jung C."/>
            <person name="Kim J.J."/>
            <person name="Hong J.H."/>
            <person name="Kim H."/>
            <person name="Kim J.-H."/>
            <person name="Kil J.-I."/>
            <person name="Park C.J."/>
            <person name="Oh H.-M."/>
            <person name="Lee J.-S."/>
            <person name="Jin S.-J."/>
            <person name="Um H.-W."/>
            <person name="Lee H.-J."/>
            <person name="Oh S.-J."/>
            <person name="Kim J.Y."/>
            <person name="Kang H.L."/>
            <person name="Lee S.Y."/>
            <person name="Lee K.J."/>
            <person name="Kang H.S."/>
        </authorList>
    </citation>
    <scope>NUCLEOTIDE SEQUENCE [LARGE SCALE GENOMIC DNA]</scope>
    <source>
        <strain>ATCC 31821 / ZM4 / CP4</strain>
    </source>
</reference>
<organism>
    <name type="scientific">Zymomonas mobilis subsp. mobilis (strain ATCC 31821 / ZM4 / CP4)</name>
    <dbReference type="NCBI Taxonomy" id="264203"/>
    <lineage>
        <taxon>Bacteria</taxon>
        <taxon>Pseudomonadati</taxon>
        <taxon>Pseudomonadota</taxon>
        <taxon>Alphaproteobacteria</taxon>
        <taxon>Sphingomonadales</taxon>
        <taxon>Zymomonadaceae</taxon>
        <taxon>Zymomonas</taxon>
    </lineage>
</organism>
<gene>
    <name evidence="1" type="primary">rplF</name>
    <name type="ordered locus">ZMO0531</name>
</gene>
<feature type="chain" id="PRO_0000265317" description="Large ribosomal subunit protein uL6">
    <location>
        <begin position="1"/>
        <end position="177"/>
    </location>
</feature>
<dbReference type="EMBL" id="AE008692">
    <property type="protein sequence ID" value="AAV89155.1"/>
    <property type="molecule type" value="Genomic_DNA"/>
</dbReference>
<dbReference type="RefSeq" id="WP_011240438.1">
    <property type="nucleotide sequence ID" value="NZ_CP035711.1"/>
</dbReference>
<dbReference type="SMR" id="Q5NQ50"/>
<dbReference type="STRING" id="264203.ZMO0531"/>
<dbReference type="GeneID" id="79904277"/>
<dbReference type="KEGG" id="zmo:ZMO0531"/>
<dbReference type="eggNOG" id="COG0097">
    <property type="taxonomic scope" value="Bacteria"/>
</dbReference>
<dbReference type="HOGENOM" id="CLU_065464_1_2_5"/>
<dbReference type="Proteomes" id="UP000001173">
    <property type="component" value="Chromosome"/>
</dbReference>
<dbReference type="GO" id="GO:0022625">
    <property type="term" value="C:cytosolic large ribosomal subunit"/>
    <property type="evidence" value="ECO:0007669"/>
    <property type="project" value="TreeGrafter"/>
</dbReference>
<dbReference type="GO" id="GO:0019843">
    <property type="term" value="F:rRNA binding"/>
    <property type="evidence" value="ECO:0007669"/>
    <property type="project" value="UniProtKB-UniRule"/>
</dbReference>
<dbReference type="GO" id="GO:0003735">
    <property type="term" value="F:structural constituent of ribosome"/>
    <property type="evidence" value="ECO:0007669"/>
    <property type="project" value="InterPro"/>
</dbReference>
<dbReference type="GO" id="GO:0002181">
    <property type="term" value="P:cytoplasmic translation"/>
    <property type="evidence" value="ECO:0007669"/>
    <property type="project" value="TreeGrafter"/>
</dbReference>
<dbReference type="FunFam" id="3.90.930.12:FF:000001">
    <property type="entry name" value="50S ribosomal protein L6"/>
    <property type="match status" value="1"/>
</dbReference>
<dbReference type="FunFam" id="3.90.930.12:FF:000002">
    <property type="entry name" value="50S ribosomal protein L6"/>
    <property type="match status" value="1"/>
</dbReference>
<dbReference type="Gene3D" id="3.90.930.12">
    <property type="entry name" value="Ribosomal protein L6, alpha-beta domain"/>
    <property type="match status" value="2"/>
</dbReference>
<dbReference type="HAMAP" id="MF_01365_B">
    <property type="entry name" value="Ribosomal_uL6_B"/>
    <property type="match status" value="1"/>
</dbReference>
<dbReference type="InterPro" id="IPR000702">
    <property type="entry name" value="Ribosomal_uL6-like"/>
</dbReference>
<dbReference type="InterPro" id="IPR036789">
    <property type="entry name" value="Ribosomal_uL6-like_a/b-dom_sf"/>
</dbReference>
<dbReference type="InterPro" id="IPR020040">
    <property type="entry name" value="Ribosomal_uL6_a/b-dom"/>
</dbReference>
<dbReference type="InterPro" id="IPR019906">
    <property type="entry name" value="Ribosomal_uL6_bac-type"/>
</dbReference>
<dbReference type="InterPro" id="IPR002358">
    <property type="entry name" value="Ribosomal_uL6_CS"/>
</dbReference>
<dbReference type="NCBIfam" id="TIGR03654">
    <property type="entry name" value="L6_bact"/>
    <property type="match status" value="1"/>
</dbReference>
<dbReference type="PANTHER" id="PTHR11655">
    <property type="entry name" value="60S/50S RIBOSOMAL PROTEIN L6/L9"/>
    <property type="match status" value="1"/>
</dbReference>
<dbReference type="PANTHER" id="PTHR11655:SF14">
    <property type="entry name" value="LARGE RIBOSOMAL SUBUNIT PROTEIN UL6M"/>
    <property type="match status" value="1"/>
</dbReference>
<dbReference type="Pfam" id="PF00347">
    <property type="entry name" value="Ribosomal_L6"/>
    <property type="match status" value="2"/>
</dbReference>
<dbReference type="PIRSF" id="PIRSF002162">
    <property type="entry name" value="Ribosomal_L6"/>
    <property type="match status" value="1"/>
</dbReference>
<dbReference type="PRINTS" id="PR00059">
    <property type="entry name" value="RIBOSOMALL6"/>
</dbReference>
<dbReference type="SUPFAM" id="SSF56053">
    <property type="entry name" value="Ribosomal protein L6"/>
    <property type="match status" value="2"/>
</dbReference>
<dbReference type="PROSITE" id="PS00525">
    <property type="entry name" value="RIBOSOMAL_L6_1"/>
    <property type="match status" value="1"/>
</dbReference>
<accession>Q5NQ50</accession>
<name>RL6_ZYMMO</name>
<protein>
    <recommendedName>
        <fullName evidence="1">Large ribosomal subunit protein uL6</fullName>
    </recommendedName>
    <alternativeName>
        <fullName evidence="2">50S ribosomal protein L6</fullName>
    </alternativeName>
</protein>